<evidence type="ECO:0000250" key="1"/>
<evidence type="ECO:0000305" key="2"/>
<accession>P50936</accession>
<accession>Q3J486</accession>
<gene>
    <name type="primary">hisA</name>
    <name type="ordered locus">RHOS4_08300</name>
    <name type="ORF">RSP_2243</name>
</gene>
<protein>
    <recommendedName>
        <fullName>1-(5-phosphoribosyl)-5-[(5-phosphoribosylamino)methylideneamino] imidazole-4-carboxamide isomerase</fullName>
        <ecNumber>5.3.1.16</ecNumber>
    </recommendedName>
    <alternativeName>
        <fullName>Phosphoribosylformimino-5-aminoimidazole carboxamide ribotide isomerase</fullName>
    </alternativeName>
</protein>
<comment type="catalytic activity">
    <reaction>
        <text>1-(5-phospho-beta-D-ribosyl)-5-[(5-phospho-beta-D-ribosylamino)methylideneamino]imidazole-4-carboxamide = 5-[(5-phospho-1-deoxy-D-ribulos-1-ylimino)methylamino]-1-(5-phospho-beta-D-ribosyl)imidazole-4-carboxamide</text>
        <dbReference type="Rhea" id="RHEA:15469"/>
        <dbReference type="ChEBI" id="CHEBI:58435"/>
        <dbReference type="ChEBI" id="CHEBI:58525"/>
        <dbReference type="EC" id="5.3.1.16"/>
    </reaction>
</comment>
<comment type="pathway">
    <text>Amino-acid biosynthesis; L-histidine biosynthesis; L-histidine from 5-phospho-alpha-D-ribose 1-diphosphate: step 4/9.</text>
</comment>
<comment type="subcellular location">
    <subcellularLocation>
        <location evidence="1">Cytoplasm</location>
    </subcellularLocation>
</comment>
<comment type="similarity">
    <text evidence="2">Belongs to the HisA/HisF family.</text>
</comment>
<sequence length="239" mass="24518">MILYPAIDLKDGQCVRLLRGEMEAATVFGDDPAAQAAAFEAAGCEWVHLVDLNGAFAGRPVNAAAVEAILARIAVPAQLGGGIRDMATIALWLEKGLARVILGTVAVENPGLVREAARAFPGRVAVGIDARKGRVATKGWATETDVMATDLARSFEDAGVAAIIYTDIDRDGAMAGPNIEATDALARAVSIPVIASGGVSSLADLLALRDTGSIAGAISGRALYDGALDLTQALQALRA</sequence>
<reference key="1">
    <citation type="submission" date="1995-05" db="EMBL/GenBank/DDBJ databases">
        <authorList>
            <person name="Oriol E."/>
        </authorList>
    </citation>
    <scope>NUCLEOTIDE SEQUENCE [GENOMIC DNA]</scope>
</reference>
<reference key="2">
    <citation type="submission" date="2005-09" db="EMBL/GenBank/DDBJ databases">
        <title>Complete sequence of chromosome 1 of Rhodobacter sphaeroides 2.4.1.</title>
        <authorList>
            <person name="Copeland A."/>
            <person name="Lucas S."/>
            <person name="Lapidus A."/>
            <person name="Barry K."/>
            <person name="Detter J.C."/>
            <person name="Glavina T."/>
            <person name="Hammon N."/>
            <person name="Israni S."/>
            <person name="Pitluck S."/>
            <person name="Richardson P."/>
            <person name="Mackenzie C."/>
            <person name="Choudhary M."/>
            <person name="Larimer F."/>
            <person name="Hauser L.J."/>
            <person name="Land M."/>
            <person name="Donohue T.J."/>
            <person name="Kaplan S."/>
        </authorList>
    </citation>
    <scope>NUCLEOTIDE SEQUENCE [LARGE SCALE GENOMIC DNA]</scope>
    <source>
        <strain>ATCC 17023 / DSM 158 / JCM 6121 / CCUG 31486 / LMG 2827 / NBRC 12203 / NCIMB 8253 / ATH 2.4.1.</strain>
    </source>
</reference>
<feature type="chain" id="PRO_0000142047" description="1-(5-phosphoribosyl)-5-[(5-phosphoribosylamino)methylideneamino] imidazole-4-carboxamide isomerase">
    <location>
        <begin position="1"/>
        <end position="239"/>
    </location>
</feature>
<feature type="active site" description="Proton acceptor" evidence="1">
    <location>
        <position position="8"/>
    </location>
</feature>
<feature type="active site" description="Proton donor" evidence="1">
    <location>
        <position position="129"/>
    </location>
</feature>
<proteinExistence type="inferred from homology"/>
<organism>
    <name type="scientific">Cereibacter sphaeroides (strain ATCC 17023 / DSM 158 / JCM 6121 / CCUG 31486 / LMG 2827 / NBRC 12203 / NCIMB 8253 / ATH 2.4.1.)</name>
    <name type="common">Rhodobacter sphaeroides</name>
    <dbReference type="NCBI Taxonomy" id="272943"/>
    <lineage>
        <taxon>Bacteria</taxon>
        <taxon>Pseudomonadati</taxon>
        <taxon>Pseudomonadota</taxon>
        <taxon>Alphaproteobacteria</taxon>
        <taxon>Rhodobacterales</taxon>
        <taxon>Paracoccaceae</taxon>
        <taxon>Cereibacter</taxon>
    </lineage>
</organism>
<name>HIS4_CERS4</name>
<dbReference type="EC" id="5.3.1.16"/>
<dbReference type="EMBL" id="X87256">
    <property type="protein sequence ID" value="CAA60709.1"/>
    <property type="molecule type" value="Genomic_DNA"/>
</dbReference>
<dbReference type="EMBL" id="CP000143">
    <property type="protein sequence ID" value="ABA78398.1"/>
    <property type="molecule type" value="Genomic_DNA"/>
</dbReference>
<dbReference type="PIR" id="S54837">
    <property type="entry name" value="S54837"/>
</dbReference>
<dbReference type="RefSeq" id="WP_011337342.1">
    <property type="nucleotide sequence ID" value="NZ_CP030271.1"/>
</dbReference>
<dbReference type="RefSeq" id="YP_352299.1">
    <property type="nucleotide sequence ID" value="NC_007493.2"/>
</dbReference>
<dbReference type="SMR" id="P50936"/>
<dbReference type="STRING" id="272943.RSP_2243"/>
<dbReference type="EnsemblBacteria" id="ABA78398">
    <property type="protein sequence ID" value="ABA78398"/>
    <property type="gene ID" value="RSP_2243"/>
</dbReference>
<dbReference type="GeneID" id="3719773"/>
<dbReference type="KEGG" id="rsp:RSP_2243"/>
<dbReference type="PATRIC" id="fig|272943.9.peg.1146"/>
<dbReference type="eggNOG" id="COG0106">
    <property type="taxonomic scope" value="Bacteria"/>
</dbReference>
<dbReference type="OrthoDB" id="9807749at2"/>
<dbReference type="PhylomeDB" id="P50936"/>
<dbReference type="UniPathway" id="UPA00031">
    <property type="reaction ID" value="UER00009"/>
</dbReference>
<dbReference type="Proteomes" id="UP000002703">
    <property type="component" value="Chromosome 1"/>
</dbReference>
<dbReference type="GO" id="GO:0005737">
    <property type="term" value="C:cytoplasm"/>
    <property type="evidence" value="ECO:0007669"/>
    <property type="project" value="UniProtKB-SubCell"/>
</dbReference>
<dbReference type="GO" id="GO:0003949">
    <property type="term" value="F:1-(5-phosphoribosyl)-5-[(5-phosphoribosylamino)methylideneamino]imidazole-4-carboxamide isomerase activity"/>
    <property type="evidence" value="ECO:0007669"/>
    <property type="project" value="UniProtKB-UniRule"/>
</dbReference>
<dbReference type="GO" id="GO:0000105">
    <property type="term" value="P:L-histidine biosynthetic process"/>
    <property type="evidence" value="ECO:0007669"/>
    <property type="project" value="UniProtKB-UniRule"/>
</dbReference>
<dbReference type="GO" id="GO:0000162">
    <property type="term" value="P:L-tryptophan biosynthetic process"/>
    <property type="evidence" value="ECO:0007669"/>
    <property type="project" value="TreeGrafter"/>
</dbReference>
<dbReference type="CDD" id="cd04732">
    <property type="entry name" value="HisA"/>
    <property type="match status" value="1"/>
</dbReference>
<dbReference type="FunFam" id="3.20.20.70:FF:000009">
    <property type="entry name" value="1-(5-phosphoribosyl)-5-[(5-phosphoribosylamino)methylideneamino] imidazole-4-carboxamide isomerase"/>
    <property type="match status" value="1"/>
</dbReference>
<dbReference type="Gene3D" id="3.20.20.70">
    <property type="entry name" value="Aldolase class I"/>
    <property type="match status" value="1"/>
</dbReference>
<dbReference type="HAMAP" id="MF_01014">
    <property type="entry name" value="HisA"/>
    <property type="match status" value="1"/>
</dbReference>
<dbReference type="InterPro" id="IPR013785">
    <property type="entry name" value="Aldolase_TIM"/>
</dbReference>
<dbReference type="InterPro" id="IPR006062">
    <property type="entry name" value="His_biosynth"/>
</dbReference>
<dbReference type="InterPro" id="IPR006063">
    <property type="entry name" value="HisA_bact_arch"/>
</dbReference>
<dbReference type="InterPro" id="IPR044524">
    <property type="entry name" value="Isoase_HisA-like"/>
</dbReference>
<dbReference type="InterPro" id="IPR023016">
    <property type="entry name" value="Isoase_HisA-like_bact"/>
</dbReference>
<dbReference type="InterPro" id="IPR011060">
    <property type="entry name" value="RibuloseP-bd_barrel"/>
</dbReference>
<dbReference type="NCBIfam" id="TIGR00007">
    <property type="entry name" value="1-(5-phosphoribosyl)-5-[(5-phosphoribosylamino)methylideneamino]imidazole-4-carboxamide isomerase"/>
    <property type="match status" value="1"/>
</dbReference>
<dbReference type="PANTHER" id="PTHR43090">
    <property type="entry name" value="1-(5-PHOSPHORIBOSYL)-5-[(5-PHOSPHORIBOSYLAMINO)METHYLIDENEAMINO] IMIDAZOLE-4-CARBOXAMIDE ISOMERASE"/>
    <property type="match status" value="1"/>
</dbReference>
<dbReference type="PANTHER" id="PTHR43090:SF2">
    <property type="entry name" value="1-(5-PHOSPHORIBOSYL)-5-[(5-PHOSPHORIBOSYLAMINO)METHYLIDENEAMINO] IMIDAZOLE-4-CARBOXAMIDE ISOMERASE"/>
    <property type="match status" value="1"/>
</dbReference>
<dbReference type="Pfam" id="PF00977">
    <property type="entry name" value="His_biosynth"/>
    <property type="match status" value="1"/>
</dbReference>
<dbReference type="SUPFAM" id="SSF51366">
    <property type="entry name" value="Ribulose-phoshate binding barrel"/>
    <property type="match status" value="1"/>
</dbReference>
<keyword id="KW-0028">Amino-acid biosynthesis</keyword>
<keyword id="KW-0963">Cytoplasm</keyword>
<keyword id="KW-0368">Histidine biosynthesis</keyword>
<keyword id="KW-0413">Isomerase</keyword>
<keyword id="KW-1185">Reference proteome</keyword>